<sequence>MSQQTTIRKLAELVNTPVDKLLVQLAEAGMKFSGPDQVVTSTEKMKLLGFLRRTHGKAETSAEAASEAAKKITLNRRKLQEVTVNAGRTKTTVNVEVRQKRTYVKSENEGSGRAAPMTPDEERADILRKLEESRQRNLEEQQRLAESDRVRDEAIQRKREEEQAAKDRAEAERKAAEEAAAAASAPAPVADAPTPSAAAPAARSPSSPSSAPRAARPAGASPASRPAAPARADDRSNAAKHKTRGSHVMVAGVEDDDATKRFAGQLHLSAADRARRSNVRGKPTGRPGSSSSRRGNDNGRGGSQANSGPHGFERPTAPVVREVAIGETITVADLAQKLALKGGDVVKALFKMGVMATITQSIDHDTAALVTEELGHKAVRADNADFEDALLAHAEDAQGEATSRPPVVTIMGHVDHGKTSLLDYIRRTKIASGEAGGITQHIGAYHVETGRGVISFLDTPGHAAFTSMRARGAKITDIVVLVVAADDGVMPQTKEAVAHAKAAGVPLIVAVNKIDKTGADPLRVKNELLAENVVAEEFGGDTQFIEVSAKVGTGVDTLLDAISLQAEVLELKAVAEGRASGTVIESSLDKGRGPVATVLVQQGALKRGDYLVCGIQYGRVRALFDETGHQPASAGPSIPVQVLGLSGVPEAGDDFVVVDDERLAKDVAQQRETKRRESRLVASATNRMEDILAQMGKGEGQQVLNLVIKADVQGSVEALKQSLVALSNEDIRINVIHSGVGGITESDANSAAASKATIIGFNVRADASARKIVESNGIDLRYFSIIYDVIDQVKQVASGLLGVEIREEIIGIAQVRDVFRSSKFGAVAGCMVIEGVVKRSKPIRVLRDSVVVFEGELESLRRFKENVDEVRNGTECGIGVKAYNDVKAGDQIECFERIEVARTL</sequence>
<gene>
    <name evidence="2" type="primary">infB</name>
    <name type="ordered locus">XCV2837</name>
</gene>
<organism>
    <name type="scientific">Xanthomonas euvesicatoria pv. vesicatoria (strain 85-10)</name>
    <name type="common">Xanthomonas campestris pv. vesicatoria</name>
    <dbReference type="NCBI Taxonomy" id="316273"/>
    <lineage>
        <taxon>Bacteria</taxon>
        <taxon>Pseudomonadati</taxon>
        <taxon>Pseudomonadota</taxon>
        <taxon>Gammaproteobacteria</taxon>
        <taxon>Lysobacterales</taxon>
        <taxon>Lysobacteraceae</taxon>
        <taxon>Xanthomonas</taxon>
    </lineage>
</organism>
<accession>Q3BRP5</accession>
<name>IF2_XANE5</name>
<dbReference type="EMBL" id="AM039952">
    <property type="protein sequence ID" value="CAJ24516.1"/>
    <property type="molecule type" value="Genomic_DNA"/>
</dbReference>
<dbReference type="RefSeq" id="WP_011347934.1">
    <property type="nucleotide sequence ID" value="NZ_CP017190.1"/>
</dbReference>
<dbReference type="SMR" id="Q3BRP5"/>
<dbReference type="STRING" id="456327.BJD11_08690"/>
<dbReference type="GeneID" id="97510974"/>
<dbReference type="KEGG" id="xcv:XCV2837"/>
<dbReference type="eggNOG" id="COG0532">
    <property type="taxonomic scope" value="Bacteria"/>
</dbReference>
<dbReference type="HOGENOM" id="CLU_006301_6_1_6"/>
<dbReference type="Proteomes" id="UP000007069">
    <property type="component" value="Chromosome"/>
</dbReference>
<dbReference type="GO" id="GO:0005829">
    <property type="term" value="C:cytosol"/>
    <property type="evidence" value="ECO:0007669"/>
    <property type="project" value="TreeGrafter"/>
</dbReference>
<dbReference type="GO" id="GO:0005525">
    <property type="term" value="F:GTP binding"/>
    <property type="evidence" value="ECO:0007669"/>
    <property type="project" value="UniProtKB-KW"/>
</dbReference>
<dbReference type="GO" id="GO:0003924">
    <property type="term" value="F:GTPase activity"/>
    <property type="evidence" value="ECO:0007669"/>
    <property type="project" value="UniProtKB-UniRule"/>
</dbReference>
<dbReference type="GO" id="GO:0097216">
    <property type="term" value="F:guanosine tetraphosphate binding"/>
    <property type="evidence" value="ECO:0007669"/>
    <property type="project" value="UniProtKB-ARBA"/>
</dbReference>
<dbReference type="GO" id="GO:0003743">
    <property type="term" value="F:translation initiation factor activity"/>
    <property type="evidence" value="ECO:0007669"/>
    <property type="project" value="UniProtKB-UniRule"/>
</dbReference>
<dbReference type="CDD" id="cd01887">
    <property type="entry name" value="IF2_eIF5B"/>
    <property type="match status" value="1"/>
</dbReference>
<dbReference type="CDD" id="cd03702">
    <property type="entry name" value="IF2_mtIF2_II"/>
    <property type="match status" value="1"/>
</dbReference>
<dbReference type="CDD" id="cd03692">
    <property type="entry name" value="mtIF2_IVc"/>
    <property type="match status" value="1"/>
</dbReference>
<dbReference type="FunFam" id="2.40.30.10:FF:000008">
    <property type="entry name" value="Translation initiation factor IF-2"/>
    <property type="match status" value="1"/>
</dbReference>
<dbReference type="FunFam" id="2.40.30.10:FF:000054">
    <property type="entry name" value="Translation initiation factor IF-2"/>
    <property type="match status" value="1"/>
</dbReference>
<dbReference type="FunFam" id="3.40.50.10050:FF:000001">
    <property type="entry name" value="Translation initiation factor IF-2"/>
    <property type="match status" value="1"/>
</dbReference>
<dbReference type="FunFam" id="3.40.50.300:FF:000019">
    <property type="entry name" value="Translation initiation factor IF-2"/>
    <property type="match status" value="1"/>
</dbReference>
<dbReference type="Gene3D" id="3.40.50.300">
    <property type="entry name" value="P-loop containing nucleotide triphosphate hydrolases"/>
    <property type="match status" value="1"/>
</dbReference>
<dbReference type="Gene3D" id="3.30.56.50">
    <property type="entry name" value="Putative DNA-binding domain, N-terminal subdomain of bacterial translation initiation factor IF2"/>
    <property type="match status" value="1"/>
</dbReference>
<dbReference type="Gene3D" id="2.40.30.10">
    <property type="entry name" value="Translation factors"/>
    <property type="match status" value="2"/>
</dbReference>
<dbReference type="Gene3D" id="3.40.50.10050">
    <property type="entry name" value="Translation initiation factor IF- 2, domain 3"/>
    <property type="match status" value="1"/>
</dbReference>
<dbReference type="HAMAP" id="MF_00100_B">
    <property type="entry name" value="IF_2_B"/>
    <property type="match status" value="1"/>
</dbReference>
<dbReference type="InterPro" id="IPR009061">
    <property type="entry name" value="DNA-bd_dom_put_sf"/>
</dbReference>
<dbReference type="InterPro" id="IPR053905">
    <property type="entry name" value="EF-G-like_DII"/>
</dbReference>
<dbReference type="InterPro" id="IPR004161">
    <property type="entry name" value="EFTu-like_2"/>
</dbReference>
<dbReference type="InterPro" id="IPR013575">
    <property type="entry name" value="IF2_assoc_dom_bac"/>
</dbReference>
<dbReference type="InterPro" id="IPR044145">
    <property type="entry name" value="IF2_II"/>
</dbReference>
<dbReference type="InterPro" id="IPR006847">
    <property type="entry name" value="IF2_N"/>
</dbReference>
<dbReference type="InterPro" id="IPR027417">
    <property type="entry name" value="P-loop_NTPase"/>
</dbReference>
<dbReference type="InterPro" id="IPR005225">
    <property type="entry name" value="Small_GTP-bd"/>
</dbReference>
<dbReference type="InterPro" id="IPR000795">
    <property type="entry name" value="T_Tr_GTP-bd_dom"/>
</dbReference>
<dbReference type="InterPro" id="IPR000178">
    <property type="entry name" value="TF_IF2_bacterial-like"/>
</dbReference>
<dbReference type="InterPro" id="IPR015760">
    <property type="entry name" value="TIF_IF2"/>
</dbReference>
<dbReference type="InterPro" id="IPR023115">
    <property type="entry name" value="TIF_IF2_dom3"/>
</dbReference>
<dbReference type="InterPro" id="IPR036925">
    <property type="entry name" value="TIF_IF2_dom3_sf"/>
</dbReference>
<dbReference type="InterPro" id="IPR009000">
    <property type="entry name" value="Transl_B-barrel_sf"/>
</dbReference>
<dbReference type="NCBIfam" id="TIGR00487">
    <property type="entry name" value="IF-2"/>
    <property type="match status" value="1"/>
</dbReference>
<dbReference type="NCBIfam" id="TIGR00231">
    <property type="entry name" value="small_GTP"/>
    <property type="match status" value="1"/>
</dbReference>
<dbReference type="PANTHER" id="PTHR43381:SF5">
    <property type="entry name" value="TR-TYPE G DOMAIN-CONTAINING PROTEIN"/>
    <property type="match status" value="1"/>
</dbReference>
<dbReference type="PANTHER" id="PTHR43381">
    <property type="entry name" value="TRANSLATION INITIATION FACTOR IF-2-RELATED"/>
    <property type="match status" value="1"/>
</dbReference>
<dbReference type="Pfam" id="PF22042">
    <property type="entry name" value="EF-G_D2"/>
    <property type="match status" value="1"/>
</dbReference>
<dbReference type="Pfam" id="PF00009">
    <property type="entry name" value="GTP_EFTU"/>
    <property type="match status" value="1"/>
</dbReference>
<dbReference type="Pfam" id="PF03144">
    <property type="entry name" value="GTP_EFTU_D2"/>
    <property type="match status" value="1"/>
</dbReference>
<dbReference type="Pfam" id="PF11987">
    <property type="entry name" value="IF-2"/>
    <property type="match status" value="1"/>
</dbReference>
<dbReference type="Pfam" id="PF08364">
    <property type="entry name" value="IF2_assoc"/>
    <property type="match status" value="1"/>
</dbReference>
<dbReference type="Pfam" id="PF04760">
    <property type="entry name" value="IF2_N"/>
    <property type="match status" value="1"/>
</dbReference>
<dbReference type="SUPFAM" id="SSF52156">
    <property type="entry name" value="Initiation factor IF2/eIF5b, domain 3"/>
    <property type="match status" value="1"/>
</dbReference>
<dbReference type="SUPFAM" id="SSF52540">
    <property type="entry name" value="P-loop containing nucleoside triphosphate hydrolases"/>
    <property type="match status" value="1"/>
</dbReference>
<dbReference type="SUPFAM" id="SSF46955">
    <property type="entry name" value="Putative DNA-binding domain"/>
    <property type="match status" value="1"/>
</dbReference>
<dbReference type="SUPFAM" id="SSF50447">
    <property type="entry name" value="Translation proteins"/>
    <property type="match status" value="2"/>
</dbReference>
<dbReference type="PROSITE" id="PS51722">
    <property type="entry name" value="G_TR_2"/>
    <property type="match status" value="1"/>
</dbReference>
<dbReference type="PROSITE" id="PS01176">
    <property type="entry name" value="IF2"/>
    <property type="match status" value="1"/>
</dbReference>
<proteinExistence type="inferred from homology"/>
<comment type="function">
    <text evidence="2">One of the essential components for the initiation of protein synthesis. Protects formylmethionyl-tRNA from spontaneous hydrolysis and promotes its binding to the 30S ribosomal subunits. Also involved in the hydrolysis of GTP during the formation of the 70S ribosomal complex.</text>
</comment>
<comment type="subcellular location">
    <subcellularLocation>
        <location evidence="2">Cytoplasm</location>
    </subcellularLocation>
</comment>
<comment type="similarity">
    <text evidence="2">Belongs to the TRAFAC class translation factor GTPase superfamily. Classic translation factor GTPase family. IF-2 subfamily.</text>
</comment>
<keyword id="KW-0963">Cytoplasm</keyword>
<keyword id="KW-0342">GTP-binding</keyword>
<keyword id="KW-0396">Initiation factor</keyword>
<keyword id="KW-0547">Nucleotide-binding</keyword>
<keyword id="KW-0648">Protein biosynthesis</keyword>
<feature type="chain" id="PRO_0000228262" description="Translation initiation factor IF-2">
    <location>
        <begin position="1"/>
        <end position="904"/>
    </location>
</feature>
<feature type="domain" description="tr-type G">
    <location>
        <begin position="403"/>
        <end position="572"/>
    </location>
</feature>
<feature type="region of interest" description="Disordered" evidence="3">
    <location>
        <begin position="103"/>
        <end position="122"/>
    </location>
</feature>
<feature type="region of interest" description="Disordered" evidence="3">
    <location>
        <begin position="137"/>
        <end position="252"/>
    </location>
</feature>
<feature type="region of interest" description="Disordered" evidence="3">
    <location>
        <begin position="267"/>
        <end position="315"/>
    </location>
</feature>
<feature type="region of interest" description="G1" evidence="1">
    <location>
        <begin position="412"/>
        <end position="419"/>
    </location>
</feature>
<feature type="region of interest" description="G2" evidence="1">
    <location>
        <begin position="437"/>
        <end position="441"/>
    </location>
</feature>
<feature type="region of interest" description="G3" evidence="1">
    <location>
        <begin position="458"/>
        <end position="461"/>
    </location>
</feature>
<feature type="region of interest" description="G4" evidence="1">
    <location>
        <begin position="512"/>
        <end position="515"/>
    </location>
</feature>
<feature type="region of interest" description="G5" evidence="1">
    <location>
        <begin position="548"/>
        <end position="550"/>
    </location>
</feature>
<feature type="compositionally biased region" description="Basic and acidic residues" evidence="3">
    <location>
        <begin position="137"/>
        <end position="177"/>
    </location>
</feature>
<feature type="compositionally biased region" description="Low complexity" evidence="3">
    <location>
        <begin position="178"/>
        <end position="230"/>
    </location>
</feature>
<feature type="compositionally biased region" description="Low complexity" evidence="3">
    <location>
        <begin position="280"/>
        <end position="293"/>
    </location>
</feature>
<feature type="binding site" evidence="2">
    <location>
        <begin position="412"/>
        <end position="419"/>
    </location>
    <ligand>
        <name>GTP</name>
        <dbReference type="ChEBI" id="CHEBI:37565"/>
    </ligand>
</feature>
<feature type="binding site" evidence="2">
    <location>
        <begin position="458"/>
        <end position="462"/>
    </location>
    <ligand>
        <name>GTP</name>
        <dbReference type="ChEBI" id="CHEBI:37565"/>
    </ligand>
</feature>
<feature type="binding site" evidence="2">
    <location>
        <begin position="512"/>
        <end position="515"/>
    </location>
    <ligand>
        <name>GTP</name>
        <dbReference type="ChEBI" id="CHEBI:37565"/>
    </ligand>
</feature>
<reference key="1">
    <citation type="journal article" date="2005" name="J. Bacteriol.">
        <title>Insights into genome plasticity and pathogenicity of the plant pathogenic Bacterium Xanthomonas campestris pv. vesicatoria revealed by the complete genome sequence.</title>
        <authorList>
            <person name="Thieme F."/>
            <person name="Koebnik R."/>
            <person name="Bekel T."/>
            <person name="Berger C."/>
            <person name="Boch J."/>
            <person name="Buettner D."/>
            <person name="Caldana C."/>
            <person name="Gaigalat L."/>
            <person name="Goesmann A."/>
            <person name="Kay S."/>
            <person name="Kirchner O."/>
            <person name="Lanz C."/>
            <person name="Linke B."/>
            <person name="McHardy A.C."/>
            <person name="Meyer F."/>
            <person name="Mittenhuber G."/>
            <person name="Nies D.H."/>
            <person name="Niesbach-Kloesgen U."/>
            <person name="Patschkowski T."/>
            <person name="Rueckert C."/>
            <person name="Rupp O."/>
            <person name="Schneiker S."/>
            <person name="Schuster S.C."/>
            <person name="Vorhoelter F.J."/>
            <person name="Weber E."/>
            <person name="Puehler A."/>
            <person name="Bonas U."/>
            <person name="Bartels D."/>
            <person name="Kaiser O."/>
        </authorList>
    </citation>
    <scope>NUCLEOTIDE SEQUENCE [LARGE SCALE GENOMIC DNA]</scope>
    <source>
        <strain>85-10</strain>
    </source>
</reference>
<evidence type="ECO:0000250" key="1"/>
<evidence type="ECO:0000255" key="2">
    <source>
        <dbReference type="HAMAP-Rule" id="MF_00100"/>
    </source>
</evidence>
<evidence type="ECO:0000256" key="3">
    <source>
        <dbReference type="SAM" id="MobiDB-lite"/>
    </source>
</evidence>
<protein>
    <recommendedName>
        <fullName evidence="2">Translation initiation factor IF-2</fullName>
    </recommendedName>
</protein>